<sequence>MKLRLKVPQWHYSLLTDYERLAIFKNAIERVVDEDDVVFDLGTGSGILAMIAAKKAKKVYAIELDPFTYDYAKENIKVNGFNNIEIIEGDASTYNFKEKADVVIAELLDTALIIEPQVKVMNSIIERGFLKEDVKIIPAKAISTIQLVEAKMSHIYYDEDIKSEEVSEEVIYEEVDFHKTNPIEVSYNIELELEKSCENLGIKLRTYTILDDKHVAGQTSMLNPPLVIPLNKKVDKGRVKINLSYRRGGDLESIKVNLG</sequence>
<dbReference type="EMBL" id="L77117">
    <property type="protein sequence ID" value="AAB99463.1"/>
    <property type="molecule type" value="Genomic_DNA"/>
</dbReference>
<dbReference type="PIR" id="C64481">
    <property type="entry name" value="C64481"/>
</dbReference>
<dbReference type="RefSeq" id="WP_010870972.1">
    <property type="nucleotide sequence ID" value="NC_000909.1"/>
</dbReference>
<dbReference type="SMR" id="Q58847"/>
<dbReference type="FunCoup" id="Q58847">
    <property type="interactions" value="4"/>
</dbReference>
<dbReference type="STRING" id="243232.MJ_1452"/>
<dbReference type="PaxDb" id="243232-MJ_1452"/>
<dbReference type="EnsemblBacteria" id="AAB99463">
    <property type="protein sequence ID" value="AAB99463"/>
    <property type="gene ID" value="MJ_1452"/>
</dbReference>
<dbReference type="GeneID" id="1452356"/>
<dbReference type="KEGG" id="mja:MJ_1452"/>
<dbReference type="eggNOG" id="arCOG04843">
    <property type="taxonomic scope" value="Archaea"/>
</dbReference>
<dbReference type="HOGENOM" id="CLU_1067987_0_0_2"/>
<dbReference type="InParanoid" id="Q58847"/>
<dbReference type="OrthoDB" id="106720at2157"/>
<dbReference type="Proteomes" id="UP000000805">
    <property type="component" value="Chromosome"/>
</dbReference>
<dbReference type="GO" id="GO:0016274">
    <property type="term" value="F:protein-arginine N-methyltransferase activity"/>
    <property type="evidence" value="ECO:0007669"/>
    <property type="project" value="InterPro"/>
</dbReference>
<dbReference type="CDD" id="cd02440">
    <property type="entry name" value="AdoMet_MTases"/>
    <property type="match status" value="1"/>
</dbReference>
<dbReference type="FunFam" id="3.40.50.150:FF:001206">
    <property type="match status" value="1"/>
</dbReference>
<dbReference type="Gene3D" id="3.40.50.150">
    <property type="entry name" value="Vaccinia Virus protein VP39"/>
    <property type="match status" value="1"/>
</dbReference>
<dbReference type="InterPro" id="IPR025799">
    <property type="entry name" value="Arg_MeTrfase"/>
</dbReference>
<dbReference type="InterPro" id="IPR029063">
    <property type="entry name" value="SAM-dependent_MTases_sf"/>
</dbReference>
<dbReference type="InterPro" id="IPR021172">
    <property type="entry name" value="UCP006607_RNA_methylase-rel"/>
</dbReference>
<dbReference type="PANTHER" id="PTHR11006">
    <property type="entry name" value="PROTEIN ARGININE N-METHYLTRANSFERASE"/>
    <property type="match status" value="1"/>
</dbReference>
<dbReference type="PANTHER" id="PTHR11006:SF4">
    <property type="entry name" value="PROTEIN ARGININE N-METHYLTRANSFERASE 7"/>
    <property type="match status" value="1"/>
</dbReference>
<dbReference type="Pfam" id="PF06325">
    <property type="entry name" value="PrmA"/>
    <property type="match status" value="1"/>
</dbReference>
<dbReference type="PIRSF" id="PIRSF006607">
    <property type="entry name" value="RNAmts_UCP006607"/>
    <property type="match status" value="1"/>
</dbReference>
<dbReference type="SUPFAM" id="SSF53335">
    <property type="entry name" value="S-adenosyl-L-methionine-dependent methyltransferases"/>
    <property type="match status" value="1"/>
</dbReference>
<protein>
    <recommendedName>
        <fullName>Uncharacterized protein MJ1452</fullName>
    </recommendedName>
</protein>
<accession>Q58847</accession>
<reference key="1">
    <citation type="journal article" date="1996" name="Science">
        <title>Complete genome sequence of the methanogenic archaeon, Methanococcus jannaschii.</title>
        <authorList>
            <person name="Bult C.J."/>
            <person name="White O."/>
            <person name="Olsen G.J."/>
            <person name="Zhou L."/>
            <person name="Fleischmann R.D."/>
            <person name="Sutton G.G."/>
            <person name="Blake J.A."/>
            <person name="FitzGerald L.M."/>
            <person name="Clayton R.A."/>
            <person name="Gocayne J.D."/>
            <person name="Kerlavage A.R."/>
            <person name="Dougherty B.A."/>
            <person name="Tomb J.-F."/>
            <person name="Adams M.D."/>
            <person name="Reich C.I."/>
            <person name="Overbeek R."/>
            <person name="Kirkness E.F."/>
            <person name="Weinstock K.G."/>
            <person name="Merrick J.M."/>
            <person name="Glodek A."/>
            <person name="Scott J.L."/>
            <person name="Geoghagen N.S.M."/>
            <person name="Weidman J.F."/>
            <person name="Fuhrmann J.L."/>
            <person name="Nguyen D."/>
            <person name="Utterback T.R."/>
            <person name="Kelley J.M."/>
            <person name="Peterson J.D."/>
            <person name="Sadow P.W."/>
            <person name="Hanna M.C."/>
            <person name="Cotton M.D."/>
            <person name="Roberts K.M."/>
            <person name="Hurst M.A."/>
            <person name="Kaine B.P."/>
            <person name="Borodovsky M."/>
            <person name="Klenk H.-P."/>
            <person name="Fraser C.M."/>
            <person name="Smith H.O."/>
            <person name="Woese C.R."/>
            <person name="Venter J.C."/>
        </authorList>
    </citation>
    <scope>NUCLEOTIDE SEQUENCE [LARGE SCALE GENOMIC DNA]</scope>
    <source>
        <strain>ATCC 43067 / DSM 2661 / JAL-1 / JCM 10045 / NBRC 100440</strain>
    </source>
</reference>
<evidence type="ECO:0000305" key="1"/>
<gene>
    <name type="ordered locus">MJ1452</name>
</gene>
<proteinExistence type="predicted"/>
<feature type="chain" id="PRO_0000107340" description="Uncharacterized protein MJ1452">
    <location>
        <begin position="1"/>
        <end position="259"/>
    </location>
</feature>
<organism>
    <name type="scientific">Methanocaldococcus jannaschii (strain ATCC 43067 / DSM 2661 / JAL-1 / JCM 10045 / NBRC 100440)</name>
    <name type="common">Methanococcus jannaschii</name>
    <dbReference type="NCBI Taxonomy" id="243232"/>
    <lineage>
        <taxon>Archaea</taxon>
        <taxon>Methanobacteriati</taxon>
        <taxon>Methanobacteriota</taxon>
        <taxon>Methanomada group</taxon>
        <taxon>Methanococci</taxon>
        <taxon>Methanococcales</taxon>
        <taxon>Methanocaldococcaceae</taxon>
        <taxon>Methanocaldococcus</taxon>
    </lineage>
</organism>
<name>Y1452_METJA</name>
<comment type="similarity">
    <text evidence="1">To M.thermoautotrophicum MTH738.</text>
</comment>
<keyword id="KW-1185">Reference proteome</keyword>